<comment type="function">
    <text evidence="1">Catalyzes the conversion of inosine 5'-phosphate (IMP) to xanthosine 5'-phosphate (XMP), the first committed and rate-limiting step in the de novo synthesis of guanine nucleotides, and therefore plays an important role in the regulation of cell growth.</text>
</comment>
<comment type="catalytic activity">
    <reaction evidence="1">
        <text>IMP + NAD(+) + H2O = XMP + NADH + H(+)</text>
        <dbReference type="Rhea" id="RHEA:11708"/>
        <dbReference type="ChEBI" id="CHEBI:15377"/>
        <dbReference type="ChEBI" id="CHEBI:15378"/>
        <dbReference type="ChEBI" id="CHEBI:57464"/>
        <dbReference type="ChEBI" id="CHEBI:57540"/>
        <dbReference type="ChEBI" id="CHEBI:57945"/>
        <dbReference type="ChEBI" id="CHEBI:58053"/>
        <dbReference type="EC" id="1.1.1.205"/>
    </reaction>
</comment>
<comment type="cofactor">
    <cofactor evidence="1">
        <name>K(+)</name>
        <dbReference type="ChEBI" id="CHEBI:29103"/>
    </cofactor>
</comment>
<comment type="activity regulation">
    <text evidence="1">Mycophenolic acid (MPA) is a non-competitive inhibitor that prevents formation of the closed enzyme conformation by binding to the same site as the amobile flap. In contrast, mizoribine monophosphate (MZP) is a competitive inhibitor that induces the closed conformation. MPA is a potent inhibitor of mammalian IMPDHs but a poor inhibitor of the bacterial enzymes. MZP is a more potent inhibitor of bacterial IMPDH.</text>
</comment>
<comment type="pathway">
    <text evidence="1">Purine metabolism; XMP biosynthesis via de novo pathway; XMP from IMP: step 1/1.</text>
</comment>
<comment type="subunit">
    <text evidence="1">Homotetramer.</text>
</comment>
<comment type="similarity">
    <text evidence="1">Belongs to the IMPDH/GMPR family.</text>
</comment>
<keyword id="KW-0129">CBS domain</keyword>
<keyword id="KW-0332">GMP biosynthesis</keyword>
<keyword id="KW-0479">Metal-binding</keyword>
<keyword id="KW-0520">NAD</keyword>
<keyword id="KW-0560">Oxidoreductase</keyword>
<keyword id="KW-0630">Potassium</keyword>
<keyword id="KW-0658">Purine biosynthesis</keyword>
<keyword id="KW-1185">Reference proteome</keyword>
<keyword id="KW-0677">Repeat</keyword>
<organism>
    <name type="scientific">Halalkalibacterium halodurans (strain ATCC BAA-125 / DSM 18197 / FERM 7344 / JCM 9153 / C-125)</name>
    <name type="common">Bacillus halodurans</name>
    <dbReference type="NCBI Taxonomy" id="272558"/>
    <lineage>
        <taxon>Bacteria</taxon>
        <taxon>Bacillati</taxon>
        <taxon>Bacillota</taxon>
        <taxon>Bacilli</taxon>
        <taxon>Bacillales</taxon>
        <taxon>Bacillaceae</taxon>
        <taxon>Halalkalibacterium (ex Joshi et al. 2022)</taxon>
    </lineage>
</organism>
<sequence>MWENKFQKEGLTFDDVLLVPAKSEVLPRDVSVKTKLTETLQLNIPIISAGMDTVTEAKMAIAIAREGGLGIIHKNMSVEEQAEQVDRVKRSESGVITNPFFLTPDRQVFDAEHLMGKYRISGVPIVDEDQKLVGILTNRDLRFIEDYSTLIDDVMTKENLVTAPVGTTLKEAEEILQKHKIEKLPLVDESGTLKGLITIKDIEKVIEFPNSAKDSQGRLIVGAAVGVSADTDVRVAALVEAGVDVIVIDTAHGHSKGVLEKVKAIREQYPDLTIIAGNVATAEATRDLIEAGANVVKVGIGPGSICTTRIVAGIGVPQITAVYDCANEARKHGVPIIADGGIKYSGDIVKALAAGGHAVMLGSLLAGVSESPGEREIFQGRQFKVYRGMGSLGAMEKGSKDRYFQENNQKLVPEGIEGRIPYKGPLHDTIHQLVGGIRAGMGYCGTKTIDELRENTQFIRITGAGLRESHPHDVQITKEAPNYTL</sequence>
<name>IMDH_HALH5</name>
<feature type="chain" id="PRO_0000093690" description="Inosine-5'-monophosphate dehydrogenase">
    <location>
        <begin position="1"/>
        <end position="485"/>
    </location>
</feature>
<feature type="domain" description="CBS 1" evidence="1">
    <location>
        <begin position="95"/>
        <end position="154"/>
    </location>
</feature>
<feature type="domain" description="CBS 2" evidence="1">
    <location>
        <begin position="155"/>
        <end position="215"/>
    </location>
</feature>
<feature type="active site" description="Thioimidate intermediate" evidence="1">
    <location>
        <position position="306"/>
    </location>
</feature>
<feature type="active site" description="Proton acceptor" evidence="1">
    <location>
        <position position="402"/>
    </location>
</feature>
<feature type="binding site" evidence="1">
    <location>
        <position position="249"/>
    </location>
    <ligand>
        <name>NAD(+)</name>
        <dbReference type="ChEBI" id="CHEBI:57540"/>
    </ligand>
</feature>
<feature type="binding site" evidence="1">
    <location>
        <begin position="299"/>
        <end position="301"/>
    </location>
    <ligand>
        <name>NAD(+)</name>
        <dbReference type="ChEBI" id="CHEBI:57540"/>
    </ligand>
</feature>
<feature type="binding site" description="in other chain" evidence="1">
    <location>
        <position position="301"/>
    </location>
    <ligand>
        <name>K(+)</name>
        <dbReference type="ChEBI" id="CHEBI:29103"/>
        <note>ligand shared between two tetrameric partners</note>
    </ligand>
</feature>
<feature type="binding site" description="in other chain" evidence="1">
    <location>
        <position position="303"/>
    </location>
    <ligand>
        <name>K(+)</name>
        <dbReference type="ChEBI" id="CHEBI:29103"/>
        <note>ligand shared between two tetrameric partners</note>
    </ligand>
</feature>
<feature type="binding site" evidence="1">
    <location>
        <position position="304"/>
    </location>
    <ligand>
        <name>IMP</name>
        <dbReference type="ChEBI" id="CHEBI:58053"/>
    </ligand>
</feature>
<feature type="binding site" description="in other chain" evidence="1">
    <location>
        <position position="306"/>
    </location>
    <ligand>
        <name>K(+)</name>
        <dbReference type="ChEBI" id="CHEBI:29103"/>
        <note>ligand shared between two tetrameric partners</note>
    </ligand>
</feature>
<feature type="binding site" evidence="1">
    <location>
        <begin position="339"/>
        <end position="341"/>
    </location>
    <ligand>
        <name>IMP</name>
        <dbReference type="ChEBI" id="CHEBI:58053"/>
    </ligand>
</feature>
<feature type="binding site" evidence="1">
    <location>
        <begin position="362"/>
        <end position="363"/>
    </location>
    <ligand>
        <name>IMP</name>
        <dbReference type="ChEBI" id="CHEBI:58053"/>
    </ligand>
</feature>
<feature type="binding site" evidence="1">
    <location>
        <begin position="386"/>
        <end position="390"/>
    </location>
    <ligand>
        <name>IMP</name>
        <dbReference type="ChEBI" id="CHEBI:58053"/>
    </ligand>
</feature>
<feature type="binding site" evidence="1">
    <location>
        <position position="414"/>
    </location>
    <ligand>
        <name>IMP</name>
        <dbReference type="ChEBI" id="CHEBI:58053"/>
    </ligand>
</feature>
<feature type="binding site" evidence="1">
    <location>
        <position position="468"/>
    </location>
    <ligand>
        <name>K(+)</name>
        <dbReference type="ChEBI" id="CHEBI:29103"/>
        <note>ligand shared between two tetrameric partners</note>
    </ligand>
</feature>
<feature type="binding site" evidence="1">
    <location>
        <position position="469"/>
    </location>
    <ligand>
        <name>K(+)</name>
        <dbReference type="ChEBI" id="CHEBI:29103"/>
        <note>ligand shared between two tetrameric partners</note>
    </ligand>
</feature>
<feature type="binding site" evidence="1">
    <location>
        <position position="470"/>
    </location>
    <ligand>
        <name>K(+)</name>
        <dbReference type="ChEBI" id="CHEBI:29103"/>
        <note>ligand shared between two tetrameric partners</note>
    </ligand>
</feature>
<protein>
    <recommendedName>
        <fullName evidence="1">Inosine-5'-monophosphate dehydrogenase</fullName>
        <shortName evidence="1">IMP dehydrogenase</shortName>
        <shortName evidence="1">IMPD</shortName>
        <shortName evidence="1">IMPDH</shortName>
        <ecNumber evidence="1">1.1.1.205</ecNumber>
    </recommendedName>
</protein>
<accession>Q9KGN8</accession>
<proteinExistence type="inferred from homology"/>
<reference key="1">
    <citation type="journal article" date="2000" name="Nucleic Acids Res.">
        <title>Complete genome sequence of the alkaliphilic bacterium Bacillus halodurans and genomic sequence comparison with Bacillus subtilis.</title>
        <authorList>
            <person name="Takami H."/>
            <person name="Nakasone K."/>
            <person name="Takaki Y."/>
            <person name="Maeno G."/>
            <person name="Sasaki R."/>
            <person name="Masui N."/>
            <person name="Fuji F."/>
            <person name="Hirama C."/>
            <person name="Nakamura Y."/>
            <person name="Ogasawara N."/>
            <person name="Kuhara S."/>
            <person name="Horikoshi K."/>
        </authorList>
    </citation>
    <scope>NUCLEOTIDE SEQUENCE [LARGE SCALE GENOMIC DNA]</scope>
    <source>
        <strain>ATCC BAA-125 / DSM 18197 / FERM 7344 / JCM 9153 / C-125</strain>
    </source>
</reference>
<gene>
    <name evidence="1" type="primary">guaB</name>
    <name type="ordered locus">BH0020</name>
</gene>
<evidence type="ECO:0000255" key="1">
    <source>
        <dbReference type="HAMAP-Rule" id="MF_01964"/>
    </source>
</evidence>
<dbReference type="EC" id="1.1.1.205" evidence="1"/>
<dbReference type="EMBL" id="BA000004">
    <property type="protein sequence ID" value="BAB03739.1"/>
    <property type="molecule type" value="Genomic_DNA"/>
</dbReference>
<dbReference type="PIR" id="D83652">
    <property type="entry name" value="D83652"/>
</dbReference>
<dbReference type="RefSeq" id="WP_010896204.1">
    <property type="nucleotide sequence ID" value="NC_002570.2"/>
</dbReference>
<dbReference type="SMR" id="Q9KGN8"/>
<dbReference type="STRING" id="272558.gene:10725838"/>
<dbReference type="GeneID" id="87595537"/>
<dbReference type="KEGG" id="bha:BH0020"/>
<dbReference type="eggNOG" id="COG0516">
    <property type="taxonomic scope" value="Bacteria"/>
</dbReference>
<dbReference type="eggNOG" id="COG0517">
    <property type="taxonomic scope" value="Bacteria"/>
</dbReference>
<dbReference type="HOGENOM" id="CLU_022552_1_0_9"/>
<dbReference type="OrthoDB" id="9805398at2"/>
<dbReference type="UniPathway" id="UPA00601">
    <property type="reaction ID" value="UER00295"/>
</dbReference>
<dbReference type="Proteomes" id="UP000001258">
    <property type="component" value="Chromosome"/>
</dbReference>
<dbReference type="GO" id="GO:0003938">
    <property type="term" value="F:IMP dehydrogenase activity"/>
    <property type="evidence" value="ECO:0007669"/>
    <property type="project" value="UniProtKB-UniRule"/>
</dbReference>
<dbReference type="GO" id="GO:0046872">
    <property type="term" value="F:metal ion binding"/>
    <property type="evidence" value="ECO:0007669"/>
    <property type="project" value="UniProtKB-UniRule"/>
</dbReference>
<dbReference type="GO" id="GO:0000166">
    <property type="term" value="F:nucleotide binding"/>
    <property type="evidence" value="ECO:0007669"/>
    <property type="project" value="UniProtKB-UniRule"/>
</dbReference>
<dbReference type="GO" id="GO:0006177">
    <property type="term" value="P:GMP biosynthetic process"/>
    <property type="evidence" value="ECO:0007669"/>
    <property type="project" value="UniProtKB-UniRule"/>
</dbReference>
<dbReference type="GO" id="GO:0006183">
    <property type="term" value="P:GTP biosynthetic process"/>
    <property type="evidence" value="ECO:0007669"/>
    <property type="project" value="TreeGrafter"/>
</dbReference>
<dbReference type="CDD" id="cd04601">
    <property type="entry name" value="CBS_pair_IMPDH"/>
    <property type="match status" value="1"/>
</dbReference>
<dbReference type="CDD" id="cd00381">
    <property type="entry name" value="IMPDH"/>
    <property type="match status" value="1"/>
</dbReference>
<dbReference type="FunFam" id="3.20.20.70:FF:000003">
    <property type="entry name" value="GMP reductase"/>
    <property type="match status" value="1"/>
</dbReference>
<dbReference type="Gene3D" id="3.20.20.70">
    <property type="entry name" value="Aldolase class I"/>
    <property type="match status" value="1"/>
</dbReference>
<dbReference type="HAMAP" id="MF_01964">
    <property type="entry name" value="IMPDH"/>
    <property type="match status" value="1"/>
</dbReference>
<dbReference type="InterPro" id="IPR013785">
    <property type="entry name" value="Aldolase_TIM"/>
</dbReference>
<dbReference type="InterPro" id="IPR000644">
    <property type="entry name" value="CBS_dom"/>
</dbReference>
<dbReference type="InterPro" id="IPR046342">
    <property type="entry name" value="CBS_dom_sf"/>
</dbReference>
<dbReference type="InterPro" id="IPR005990">
    <property type="entry name" value="IMP_DH"/>
</dbReference>
<dbReference type="InterPro" id="IPR015875">
    <property type="entry name" value="IMP_DH/GMP_Rdtase_CS"/>
</dbReference>
<dbReference type="InterPro" id="IPR001093">
    <property type="entry name" value="IMP_DH_GMPRt"/>
</dbReference>
<dbReference type="NCBIfam" id="TIGR01302">
    <property type="entry name" value="IMP_dehydrog"/>
    <property type="match status" value="1"/>
</dbReference>
<dbReference type="PANTHER" id="PTHR11911:SF111">
    <property type="entry name" value="INOSINE-5'-MONOPHOSPHATE DEHYDROGENASE"/>
    <property type="match status" value="1"/>
</dbReference>
<dbReference type="PANTHER" id="PTHR11911">
    <property type="entry name" value="INOSINE-5-MONOPHOSPHATE DEHYDROGENASE RELATED"/>
    <property type="match status" value="1"/>
</dbReference>
<dbReference type="Pfam" id="PF00571">
    <property type="entry name" value="CBS"/>
    <property type="match status" value="2"/>
</dbReference>
<dbReference type="Pfam" id="PF00478">
    <property type="entry name" value="IMPDH"/>
    <property type="match status" value="1"/>
</dbReference>
<dbReference type="PIRSF" id="PIRSF000130">
    <property type="entry name" value="IMPDH"/>
    <property type="match status" value="1"/>
</dbReference>
<dbReference type="SMART" id="SM00116">
    <property type="entry name" value="CBS"/>
    <property type="match status" value="2"/>
</dbReference>
<dbReference type="SMART" id="SM01240">
    <property type="entry name" value="IMPDH"/>
    <property type="match status" value="1"/>
</dbReference>
<dbReference type="SUPFAM" id="SSF54631">
    <property type="entry name" value="CBS-domain pair"/>
    <property type="match status" value="1"/>
</dbReference>
<dbReference type="SUPFAM" id="SSF51412">
    <property type="entry name" value="Inosine monophosphate dehydrogenase (IMPDH)"/>
    <property type="match status" value="1"/>
</dbReference>
<dbReference type="PROSITE" id="PS51371">
    <property type="entry name" value="CBS"/>
    <property type="match status" value="2"/>
</dbReference>
<dbReference type="PROSITE" id="PS00487">
    <property type="entry name" value="IMP_DH_GMP_RED"/>
    <property type="match status" value="1"/>
</dbReference>